<organism>
    <name type="scientific">Burkholderia thailandensis (strain ATCC 700388 / DSM 13276 / CCUG 48851 / CIP 106301 / E264)</name>
    <dbReference type="NCBI Taxonomy" id="271848"/>
    <lineage>
        <taxon>Bacteria</taxon>
        <taxon>Pseudomonadati</taxon>
        <taxon>Pseudomonadota</taxon>
        <taxon>Betaproteobacteria</taxon>
        <taxon>Burkholderiales</taxon>
        <taxon>Burkholderiaceae</taxon>
        <taxon>Burkholderia</taxon>
        <taxon>pseudomallei group</taxon>
    </lineage>
</organism>
<proteinExistence type="inferred from homology"/>
<evidence type="ECO:0000255" key="1">
    <source>
        <dbReference type="HAMAP-Rule" id="MF_01318"/>
    </source>
</evidence>
<evidence type="ECO:0000305" key="2"/>
<keyword id="KW-0678">Repressor</keyword>
<keyword id="KW-0687">Ribonucleoprotein</keyword>
<keyword id="KW-0689">Ribosomal protein</keyword>
<keyword id="KW-0694">RNA-binding</keyword>
<keyword id="KW-0699">rRNA-binding</keyword>
<keyword id="KW-0810">Translation regulation</keyword>
<keyword id="KW-0820">tRNA-binding</keyword>
<comment type="function">
    <text evidence="1">Binds directly to 23S rRNA. The L1 stalk is quite mobile in the ribosome, and is involved in E site tRNA release.</text>
</comment>
<comment type="function">
    <text evidence="1">Protein L1 is also a translational repressor protein, it controls the translation of the L11 operon by binding to its mRNA.</text>
</comment>
<comment type="subunit">
    <text evidence="1">Part of the 50S ribosomal subunit.</text>
</comment>
<comment type="similarity">
    <text evidence="1">Belongs to the universal ribosomal protein uL1 family.</text>
</comment>
<gene>
    <name evidence="1" type="primary">rplA</name>
    <name type="ordered locus">BTH_I3079</name>
</gene>
<protein>
    <recommendedName>
        <fullName evidence="1">Large ribosomal subunit protein uL1</fullName>
    </recommendedName>
    <alternativeName>
        <fullName evidence="2">50S ribosomal protein L1</fullName>
    </alternativeName>
</protein>
<sequence>MAKISKRRQAFAAKVDRQKLYPIDDALALVKECASAKFDESIDVAVQLGIDAKKSDQVVRGSVVLPAGTGKSVRVAVFAQGEKAEQARAAGAEVVGMEDLAEQIKAGQMDFDIVIASPDTMRIVGTLGQILGPRGLMPNPKVGTVTPDVATAVKNAKAGQVQFRVDKAGIIHATIGRASFEPTALRTNLSALIEALQKAKPATSKGVYLRKIALSSTMGVGVRVDQGSLAAQ</sequence>
<name>RL1_BURTA</name>
<accession>Q2SU16</accession>
<reference key="1">
    <citation type="journal article" date="2005" name="BMC Genomics">
        <title>Bacterial genome adaptation to niches: divergence of the potential virulence genes in three Burkholderia species of different survival strategies.</title>
        <authorList>
            <person name="Kim H.S."/>
            <person name="Schell M.A."/>
            <person name="Yu Y."/>
            <person name="Ulrich R.L."/>
            <person name="Sarria S.H."/>
            <person name="Nierman W.C."/>
            <person name="DeShazer D."/>
        </authorList>
    </citation>
    <scope>NUCLEOTIDE SEQUENCE [LARGE SCALE GENOMIC DNA]</scope>
    <source>
        <strain>ATCC 700388 / DSM 13276 / CCUG 48851 / CIP 106301 / E264</strain>
    </source>
</reference>
<feature type="chain" id="PRO_0000307979" description="Large ribosomal subunit protein uL1">
    <location>
        <begin position="1"/>
        <end position="232"/>
    </location>
</feature>
<dbReference type="EMBL" id="CP000086">
    <property type="protein sequence ID" value="ABC37669.1"/>
    <property type="molecule type" value="Genomic_DNA"/>
</dbReference>
<dbReference type="RefSeq" id="WP_004185135.1">
    <property type="nucleotide sequence ID" value="NZ_CP008786.1"/>
</dbReference>
<dbReference type="SMR" id="Q2SU16"/>
<dbReference type="GeneID" id="93061844"/>
<dbReference type="KEGG" id="bte:BTH_I3079"/>
<dbReference type="HOGENOM" id="CLU_062853_0_0_4"/>
<dbReference type="Proteomes" id="UP000001930">
    <property type="component" value="Chromosome I"/>
</dbReference>
<dbReference type="GO" id="GO:0022625">
    <property type="term" value="C:cytosolic large ribosomal subunit"/>
    <property type="evidence" value="ECO:0007669"/>
    <property type="project" value="TreeGrafter"/>
</dbReference>
<dbReference type="GO" id="GO:0019843">
    <property type="term" value="F:rRNA binding"/>
    <property type="evidence" value="ECO:0007669"/>
    <property type="project" value="UniProtKB-UniRule"/>
</dbReference>
<dbReference type="GO" id="GO:0003735">
    <property type="term" value="F:structural constituent of ribosome"/>
    <property type="evidence" value="ECO:0007669"/>
    <property type="project" value="InterPro"/>
</dbReference>
<dbReference type="GO" id="GO:0000049">
    <property type="term" value="F:tRNA binding"/>
    <property type="evidence" value="ECO:0007669"/>
    <property type="project" value="UniProtKB-KW"/>
</dbReference>
<dbReference type="GO" id="GO:0006417">
    <property type="term" value="P:regulation of translation"/>
    <property type="evidence" value="ECO:0007669"/>
    <property type="project" value="UniProtKB-KW"/>
</dbReference>
<dbReference type="GO" id="GO:0006412">
    <property type="term" value="P:translation"/>
    <property type="evidence" value="ECO:0007669"/>
    <property type="project" value="UniProtKB-UniRule"/>
</dbReference>
<dbReference type="CDD" id="cd00403">
    <property type="entry name" value="Ribosomal_L1"/>
    <property type="match status" value="1"/>
</dbReference>
<dbReference type="FunFam" id="3.40.50.790:FF:000001">
    <property type="entry name" value="50S ribosomal protein L1"/>
    <property type="match status" value="1"/>
</dbReference>
<dbReference type="Gene3D" id="3.30.190.20">
    <property type="match status" value="1"/>
</dbReference>
<dbReference type="Gene3D" id="3.40.50.790">
    <property type="match status" value="1"/>
</dbReference>
<dbReference type="HAMAP" id="MF_01318_B">
    <property type="entry name" value="Ribosomal_uL1_B"/>
    <property type="match status" value="1"/>
</dbReference>
<dbReference type="InterPro" id="IPR005878">
    <property type="entry name" value="Ribosom_uL1_bac-type"/>
</dbReference>
<dbReference type="InterPro" id="IPR002143">
    <property type="entry name" value="Ribosomal_uL1"/>
</dbReference>
<dbReference type="InterPro" id="IPR023674">
    <property type="entry name" value="Ribosomal_uL1-like"/>
</dbReference>
<dbReference type="InterPro" id="IPR028364">
    <property type="entry name" value="Ribosomal_uL1/biogenesis"/>
</dbReference>
<dbReference type="InterPro" id="IPR016095">
    <property type="entry name" value="Ribosomal_uL1_3-a/b-sand"/>
</dbReference>
<dbReference type="InterPro" id="IPR023673">
    <property type="entry name" value="Ribosomal_uL1_CS"/>
</dbReference>
<dbReference type="NCBIfam" id="TIGR01169">
    <property type="entry name" value="rplA_bact"/>
    <property type="match status" value="1"/>
</dbReference>
<dbReference type="PANTHER" id="PTHR36427">
    <property type="entry name" value="54S RIBOSOMAL PROTEIN L1, MITOCHONDRIAL"/>
    <property type="match status" value="1"/>
</dbReference>
<dbReference type="PANTHER" id="PTHR36427:SF3">
    <property type="entry name" value="LARGE RIBOSOMAL SUBUNIT PROTEIN UL1M"/>
    <property type="match status" value="1"/>
</dbReference>
<dbReference type="Pfam" id="PF00687">
    <property type="entry name" value="Ribosomal_L1"/>
    <property type="match status" value="1"/>
</dbReference>
<dbReference type="PIRSF" id="PIRSF002155">
    <property type="entry name" value="Ribosomal_L1"/>
    <property type="match status" value="1"/>
</dbReference>
<dbReference type="SUPFAM" id="SSF56808">
    <property type="entry name" value="Ribosomal protein L1"/>
    <property type="match status" value="1"/>
</dbReference>
<dbReference type="PROSITE" id="PS01199">
    <property type="entry name" value="RIBOSOMAL_L1"/>
    <property type="match status" value="1"/>
</dbReference>